<gene>
    <name type="primary">PDCB1</name>
    <name type="ordered locus">At5g61130</name>
    <name type="ORF">MAF19.13</name>
</gene>
<dbReference type="EMBL" id="AB006696">
    <property type="protein sequence ID" value="BAB10375.1"/>
    <property type="molecule type" value="Genomic_DNA"/>
</dbReference>
<dbReference type="EMBL" id="CP002688">
    <property type="protein sequence ID" value="AED97424.1"/>
    <property type="molecule type" value="Genomic_DNA"/>
</dbReference>
<dbReference type="EMBL" id="BT005195">
    <property type="protein sequence ID" value="AAO50728.1"/>
    <property type="molecule type" value="mRNA"/>
</dbReference>
<dbReference type="EMBL" id="BT003876">
    <property type="protein sequence ID" value="AAO41925.1"/>
    <property type="molecule type" value="mRNA"/>
</dbReference>
<dbReference type="RefSeq" id="NP_200921.2">
    <property type="nucleotide sequence ID" value="NM_125506.5"/>
</dbReference>
<dbReference type="SMR" id="Q9FNQ2"/>
<dbReference type="FunCoup" id="Q9FNQ2">
    <property type="interactions" value="611"/>
</dbReference>
<dbReference type="STRING" id="3702.Q9FNQ2"/>
<dbReference type="CAZy" id="CBM43">
    <property type="family name" value="Carbohydrate-Binding Module Family 43"/>
</dbReference>
<dbReference type="TCDB" id="1.I.2.1.1">
    <property type="family name" value="the plant plasmodesmata (ppd) family"/>
</dbReference>
<dbReference type="GlyCosmos" id="Q9FNQ2">
    <property type="glycosylation" value="2 sites, No reported glycans"/>
</dbReference>
<dbReference type="GlyGen" id="Q9FNQ2">
    <property type="glycosylation" value="3 sites"/>
</dbReference>
<dbReference type="PaxDb" id="3702-AT5G61130.1"/>
<dbReference type="ProteomicsDB" id="236803"/>
<dbReference type="EnsemblPlants" id="AT5G61130.1">
    <property type="protein sequence ID" value="AT5G61130.1"/>
    <property type="gene ID" value="AT5G61130"/>
</dbReference>
<dbReference type="GeneID" id="836234"/>
<dbReference type="Gramene" id="AT5G61130.1">
    <property type="protein sequence ID" value="AT5G61130.1"/>
    <property type="gene ID" value="AT5G61130"/>
</dbReference>
<dbReference type="KEGG" id="ath:AT5G61130"/>
<dbReference type="Araport" id="AT5G61130"/>
<dbReference type="TAIR" id="AT5G61130">
    <property type="gene designation" value="PDCB1"/>
</dbReference>
<dbReference type="eggNOG" id="ENOG502RYRZ">
    <property type="taxonomic scope" value="Eukaryota"/>
</dbReference>
<dbReference type="HOGENOM" id="CLU_031666_1_0_1"/>
<dbReference type="InParanoid" id="Q9FNQ2"/>
<dbReference type="OMA" id="KQSCFNP"/>
<dbReference type="OrthoDB" id="1930814at2759"/>
<dbReference type="PhylomeDB" id="Q9FNQ2"/>
<dbReference type="PRO" id="PR:Q9FNQ2"/>
<dbReference type="Proteomes" id="UP000006548">
    <property type="component" value="Chromosome 5"/>
</dbReference>
<dbReference type="ExpressionAtlas" id="Q9FNQ2">
    <property type="expression patterns" value="baseline and differential"/>
</dbReference>
<dbReference type="GO" id="GO:0009505">
    <property type="term" value="C:plant-type cell wall"/>
    <property type="evidence" value="ECO:0007005"/>
    <property type="project" value="TAIR"/>
</dbReference>
<dbReference type="GO" id="GO:0005886">
    <property type="term" value="C:plasma membrane"/>
    <property type="evidence" value="ECO:0007669"/>
    <property type="project" value="UniProtKB-SubCell"/>
</dbReference>
<dbReference type="GO" id="GO:0009506">
    <property type="term" value="C:plasmodesma"/>
    <property type="evidence" value="ECO:0000314"/>
    <property type="project" value="TAIR"/>
</dbReference>
<dbReference type="GO" id="GO:0009536">
    <property type="term" value="C:plastid"/>
    <property type="evidence" value="ECO:0007005"/>
    <property type="project" value="TAIR"/>
</dbReference>
<dbReference type="GO" id="GO:0098552">
    <property type="term" value="C:side of membrane"/>
    <property type="evidence" value="ECO:0007669"/>
    <property type="project" value="UniProtKB-KW"/>
</dbReference>
<dbReference type="GO" id="GO:0001872">
    <property type="term" value="F:(1-&gt;3)-beta-D-glucan binding"/>
    <property type="evidence" value="ECO:0000314"/>
    <property type="project" value="TAIR"/>
</dbReference>
<dbReference type="GO" id="GO:0030247">
    <property type="term" value="F:polysaccharide binding"/>
    <property type="evidence" value="ECO:0000314"/>
    <property type="project" value="TAIR"/>
</dbReference>
<dbReference type="GO" id="GO:0052543">
    <property type="term" value="P:callose deposition in cell wall"/>
    <property type="evidence" value="ECO:0000315"/>
    <property type="project" value="TAIR"/>
</dbReference>
<dbReference type="FunFam" id="1.20.58.1040:FF:000001">
    <property type="entry name" value="Glucan endo-1,3-beta-glucosidase 4"/>
    <property type="match status" value="1"/>
</dbReference>
<dbReference type="Gene3D" id="1.20.58.1040">
    <property type="match status" value="1"/>
</dbReference>
<dbReference type="InterPro" id="IPR012946">
    <property type="entry name" value="X8"/>
</dbReference>
<dbReference type="InterPro" id="IPR044788">
    <property type="entry name" value="X8_dom_prot"/>
</dbReference>
<dbReference type="PANTHER" id="PTHR31044">
    <property type="entry name" value="BETA-1,3 GLUCANASE"/>
    <property type="match status" value="1"/>
</dbReference>
<dbReference type="PANTHER" id="PTHR31044:SF61">
    <property type="entry name" value="PLASMODESMATA CALLOSE-BINDING PROTEIN 1"/>
    <property type="match status" value="1"/>
</dbReference>
<dbReference type="Pfam" id="PF07983">
    <property type="entry name" value="X8"/>
    <property type="match status" value="1"/>
</dbReference>
<dbReference type="SMART" id="SM00768">
    <property type="entry name" value="X8"/>
    <property type="match status" value="1"/>
</dbReference>
<protein>
    <recommendedName>
        <fullName>PLASMODESMATA CALLOSE-BINDING PROTEIN 1</fullName>
        <shortName>AtPDCB1</shortName>
    </recommendedName>
    <alternativeName>
        <fullName>Glucan endo-1,3-beta-glucosidase-like protein 2</fullName>
    </alternativeName>
</protein>
<organism>
    <name type="scientific">Arabidopsis thaliana</name>
    <name type="common">Mouse-ear cress</name>
    <dbReference type="NCBI Taxonomy" id="3702"/>
    <lineage>
        <taxon>Eukaryota</taxon>
        <taxon>Viridiplantae</taxon>
        <taxon>Streptophyta</taxon>
        <taxon>Embryophyta</taxon>
        <taxon>Tracheophyta</taxon>
        <taxon>Spermatophyta</taxon>
        <taxon>Magnoliopsida</taxon>
        <taxon>eudicotyledons</taxon>
        <taxon>Gunneridae</taxon>
        <taxon>Pentapetalae</taxon>
        <taxon>rosids</taxon>
        <taxon>malvids</taxon>
        <taxon>Brassicales</taxon>
        <taxon>Brassicaceae</taxon>
        <taxon>Camelineae</taxon>
        <taxon>Arabidopsis</taxon>
    </lineage>
</organism>
<sequence>MAALVLSLLLLSLAGHSSASWCVCKTGLSDTVLQATLDYACGNGADCNPTKPKQSCFNPDNVRSHCNYAVNSFFQKKGQSPGSCNFDGTATPTNSDPSYTGCAFPTSASGSSGSTTVTPGTTNPKGSPTTTTLPGSGTNSPYSGNPTNGVFGGNSTGGTTGTGINPDYTTDSSAFALKNSSKLFICLLLIASSGFCSFLML</sequence>
<feature type="signal peptide" evidence="2">
    <location>
        <begin position="1"/>
        <end position="19"/>
    </location>
</feature>
<feature type="chain" id="PRO_0000254001" description="PLASMODESMATA CALLOSE-BINDING PROTEIN 1">
    <location>
        <begin position="20"/>
        <end position="172"/>
    </location>
</feature>
<feature type="propeptide" id="PRO_0000254002" description="Removed in mature form" evidence="2">
    <location>
        <begin position="173"/>
        <end position="201"/>
    </location>
</feature>
<feature type="region of interest" description="Disordered" evidence="3">
    <location>
        <begin position="107"/>
        <end position="164"/>
    </location>
</feature>
<feature type="compositionally biased region" description="Low complexity" evidence="3">
    <location>
        <begin position="107"/>
        <end position="141"/>
    </location>
</feature>
<feature type="compositionally biased region" description="Gly residues" evidence="3">
    <location>
        <begin position="150"/>
        <end position="161"/>
    </location>
</feature>
<feature type="lipid moiety-binding region" description="GPI-anchor amidated serine" evidence="2">
    <location>
        <position position="172"/>
    </location>
</feature>
<feature type="glycosylation site" description="N-linked (GlcNAc...) asparagine" evidence="2">
    <location>
        <position position="154"/>
    </location>
</feature>
<feature type="glycosylation site" description="N-linked (GlcNAc...) asparagine" evidence="2">
    <location>
        <position position="179"/>
    </location>
</feature>
<feature type="disulfide bond" evidence="1">
    <location>
        <begin position="22"/>
        <end position="84"/>
    </location>
</feature>
<keyword id="KW-0965">Cell junction</keyword>
<keyword id="KW-1003">Cell membrane</keyword>
<keyword id="KW-1015">Disulfide bond</keyword>
<keyword id="KW-0325">Glycoprotein</keyword>
<keyword id="KW-0336">GPI-anchor</keyword>
<keyword id="KW-0449">Lipoprotein</keyword>
<keyword id="KW-0472">Membrane</keyword>
<keyword id="KW-1185">Reference proteome</keyword>
<keyword id="KW-0732">Signal</keyword>
<proteinExistence type="evidence at protein level"/>
<reference key="1">
    <citation type="journal article" date="1997" name="DNA Res.">
        <title>Structural analysis of Arabidopsis thaliana chromosome 5. II. Sequence features of the regions of 1,044,062 bp covered by thirteen physically assigned P1 clones.</title>
        <authorList>
            <person name="Kotani H."/>
            <person name="Nakamura Y."/>
            <person name="Sato S."/>
            <person name="Kaneko T."/>
            <person name="Asamizu E."/>
            <person name="Miyajima N."/>
            <person name="Tabata S."/>
        </authorList>
    </citation>
    <scope>NUCLEOTIDE SEQUENCE [LARGE SCALE GENOMIC DNA]</scope>
    <source>
        <strain>cv. Columbia</strain>
    </source>
</reference>
<reference key="2">
    <citation type="journal article" date="2017" name="Plant J.">
        <title>Araport11: a complete reannotation of the Arabidopsis thaliana reference genome.</title>
        <authorList>
            <person name="Cheng C.Y."/>
            <person name="Krishnakumar V."/>
            <person name="Chan A.P."/>
            <person name="Thibaud-Nissen F."/>
            <person name="Schobel S."/>
            <person name="Town C.D."/>
        </authorList>
    </citation>
    <scope>GENOME REANNOTATION</scope>
    <source>
        <strain>cv. Columbia</strain>
    </source>
</reference>
<reference key="3">
    <citation type="journal article" date="2003" name="Science">
        <title>Empirical analysis of transcriptional activity in the Arabidopsis genome.</title>
        <authorList>
            <person name="Yamada K."/>
            <person name="Lim J."/>
            <person name="Dale J.M."/>
            <person name="Chen H."/>
            <person name="Shinn P."/>
            <person name="Palm C.J."/>
            <person name="Southwick A.M."/>
            <person name="Wu H.C."/>
            <person name="Kim C.J."/>
            <person name="Nguyen M."/>
            <person name="Pham P.K."/>
            <person name="Cheuk R.F."/>
            <person name="Karlin-Newmann G."/>
            <person name="Liu S.X."/>
            <person name="Lam B."/>
            <person name="Sakano H."/>
            <person name="Wu T."/>
            <person name="Yu G."/>
            <person name="Miranda M."/>
            <person name="Quach H.L."/>
            <person name="Tripp M."/>
            <person name="Chang C.H."/>
            <person name="Lee J.M."/>
            <person name="Toriumi M.J."/>
            <person name="Chan M.M."/>
            <person name="Tang C.C."/>
            <person name="Onodera C.S."/>
            <person name="Deng J.M."/>
            <person name="Akiyama K."/>
            <person name="Ansari Y."/>
            <person name="Arakawa T."/>
            <person name="Banh J."/>
            <person name="Banno F."/>
            <person name="Bowser L."/>
            <person name="Brooks S.Y."/>
            <person name="Carninci P."/>
            <person name="Chao Q."/>
            <person name="Choy N."/>
            <person name="Enju A."/>
            <person name="Goldsmith A.D."/>
            <person name="Gurjal M."/>
            <person name="Hansen N.F."/>
            <person name="Hayashizaki Y."/>
            <person name="Johnson-Hopson C."/>
            <person name="Hsuan V.W."/>
            <person name="Iida K."/>
            <person name="Karnes M."/>
            <person name="Khan S."/>
            <person name="Koesema E."/>
            <person name="Ishida J."/>
            <person name="Jiang P.X."/>
            <person name="Jones T."/>
            <person name="Kawai J."/>
            <person name="Kamiya A."/>
            <person name="Meyers C."/>
            <person name="Nakajima M."/>
            <person name="Narusaka M."/>
            <person name="Seki M."/>
            <person name="Sakurai T."/>
            <person name="Satou M."/>
            <person name="Tamse R."/>
            <person name="Vaysberg M."/>
            <person name="Wallender E.K."/>
            <person name="Wong C."/>
            <person name="Yamamura Y."/>
            <person name="Yuan S."/>
            <person name="Shinozaki K."/>
            <person name="Davis R.W."/>
            <person name="Theologis A."/>
            <person name="Ecker J.R."/>
        </authorList>
    </citation>
    <scope>NUCLEOTIDE SEQUENCE [LARGE SCALE MRNA]</scope>
    <source>
        <strain>cv. Columbia</strain>
    </source>
</reference>
<reference key="4">
    <citation type="journal article" date="2009" name="Plant Cell">
        <title>An Arabidopsis GPI-anchor plasmodesmal neck protein with callose binding activity and potential to regulate cell-to-cell trafficking.</title>
        <authorList>
            <person name="Simpson C."/>
            <person name="Thomas C."/>
            <person name="Findlay K."/>
            <person name="Bayer E."/>
            <person name="Maule A.J."/>
        </authorList>
    </citation>
    <scope>GENE FAMILY</scope>
    <scope>NOMENCLATURE</scope>
    <scope>FUNCTION</scope>
    <scope>SUBCELLULAR LOCATION</scope>
    <scope>TISSUE SPECIFICITY</scope>
    <scope>GPI-ANCHOR</scope>
</reference>
<evidence type="ECO:0000250" key="1"/>
<evidence type="ECO:0000255" key="2"/>
<evidence type="ECO:0000256" key="3">
    <source>
        <dbReference type="SAM" id="MobiDB-lite"/>
    </source>
</evidence>
<evidence type="ECO:0000269" key="4">
    <source>
    </source>
</evidence>
<accession>Q9FNQ2</accession>
<comment type="function">
    <text evidence="4">Able to bind (1-&gt;3)-beta-D-glucans (laminarin). Probably involved in cell-to-cell trafficking regulation.</text>
</comment>
<comment type="subcellular location">
    <subcellularLocation>
        <location evidence="4">Cell membrane</location>
        <topology evidence="4">Lipid-anchor</topology>
        <topology evidence="4">GPI-anchor</topology>
    </subcellularLocation>
    <subcellularLocation>
        <location evidence="4">Cell junction</location>
        <location evidence="4">Plasmodesma</location>
    </subcellularLocation>
</comment>
<comment type="tissue specificity">
    <text evidence="4">Expressed in the shoot apical region and in young leaves but also detected in the laminar and vasculature of mature leaves.</text>
</comment>
<comment type="PTM">
    <text evidence="1">Contains two additional disulfide bonds.</text>
</comment>
<comment type="miscellaneous">
    <text>Overexpression of PDCB1 results in callose accumulation and decreased plasmodesmal molecular diffusion.</text>
</comment>
<name>PDCB1_ARATH</name>